<comment type="catalytic activity">
    <reaction evidence="1">
        <text>L-homoserine + ATP = O-phospho-L-homoserine + ADP + H(+)</text>
        <dbReference type="Rhea" id="RHEA:13985"/>
        <dbReference type="ChEBI" id="CHEBI:15378"/>
        <dbReference type="ChEBI" id="CHEBI:30616"/>
        <dbReference type="ChEBI" id="CHEBI:57476"/>
        <dbReference type="ChEBI" id="CHEBI:57590"/>
        <dbReference type="ChEBI" id="CHEBI:456216"/>
        <dbReference type="EC" id="2.7.1.39"/>
    </reaction>
</comment>
<comment type="pathway">
    <text evidence="1">Amino-acid biosynthesis; L-threonine biosynthesis; L-threonine from L-aspartate: step 4/5.</text>
</comment>
<comment type="similarity">
    <text evidence="1">Belongs to the pseudomonas-type ThrB family.</text>
</comment>
<organism>
    <name type="scientific">Brucella canis (strain ATCC 23365 / NCTC 10854 / RM-666)</name>
    <dbReference type="NCBI Taxonomy" id="483179"/>
    <lineage>
        <taxon>Bacteria</taxon>
        <taxon>Pseudomonadati</taxon>
        <taxon>Pseudomonadota</taxon>
        <taxon>Alphaproteobacteria</taxon>
        <taxon>Hyphomicrobiales</taxon>
        <taxon>Brucellaceae</taxon>
        <taxon>Brucella/Ochrobactrum group</taxon>
        <taxon>Brucella</taxon>
    </lineage>
</organism>
<evidence type="ECO:0000255" key="1">
    <source>
        <dbReference type="HAMAP-Rule" id="MF_00301"/>
    </source>
</evidence>
<sequence length="326" mass="36629">MAVYTDINEIELGAFLRHYDIGTLTSYKGIAEGVENSNYLLHTSSGSFILTLYEKRTNREDLPFFLGLMQHLAKRGLECPQPVVRNDGAMIGQLAGRPAAIVTFLEGMWMRRPTVAHCEAVGEGLAHMHLAGADFPMRRRNGLTLPDWRPLWNLSRKCADTVERGLVAETEADLDFLEKNWPADLPQGVIHADLFPDNAFFLGDRLSGFIDFYFACTDILAYDVAVCLNAWCFEKDFSYNRTKGAALLRGYTSVRPLSEAEADALPVLARGAAVRFMLTRLYDWLTVPAGSFVVKKDPMEYVRRMRFHRQIESAAEYGLEMQGVAA</sequence>
<keyword id="KW-0028">Amino-acid biosynthesis</keyword>
<keyword id="KW-0067">ATP-binding</keyword>
<keyword id="KW-0418">Kinase</keyword>
<keyword id="KW-0547">Nucleotide-binding</keyword>
<keyword id="KW-1185">Reference proteome</keyword>
<keyword id="KW-0791">Threonine biosynthesis</keyword>
<keyword id="KW-0808">Transferase</keyword>
<accession>A9M8Z9</accession>
<name>KHSE_BRUC2</name>
<reference key="1">
    <citation type="submission" date="2007-10" db="EMBL/GenBank/DDBJ databases">
        <title>Brucella canis ATCC 23365 whole genome shotgun sequencing project.</title>
        <authorList>
            <person name="Setubal J.C."/>
            <person name="Bowns C."/>
            <person name="Boyle S."/>
            <person name="Crasta O.R."/>
            <person name="Czar M.J."/>
            <person name="Dharmanolla C."/>
            <person name="Gillespie J.J."/>
            <person name="Kenyon R.W."/>
            <person name="Lu J."/>
            <person name="Mane S."/>
            <person name="Mohapatra S."/>
            <person name="Nagrani S."/>
            <person name="Purkayastha A."/>
            <person name="Rajasimha H.K."/>
            <person name="Shallom J.M."/>
            <person name="Shallom S."/>
            <person name="Shukla M."/>
            <person name="Snyder E.E."/>
            <person name="Sobral B.W."/>
            <person name="Wattam A.R."/>
            <person name="Will R."/>
            <person name="Williams K."/>
            <person name="Yoo H."/>
            <person name="Bruce D."/>
            <person name="Detter C."/>
            <person name="Munk C."/>
            <person name="Brettin T.S."/>
        </authorList>
    </citation>
    <scope>NUCLEOTIDE SEQUENCE [LARGE SCALE GENOMIC DNA]</scope>
    <source>
        <strain>ATCC 23365 / NCTC 10854 / RM-666</strain>
    </source>
</reference>
<protein>
    <recommendedName>
        <fullName evidence="1">Homoserine kinase</fullName>
        <shortName evidence="1">HK</shortName>
        <shortName evidence="1">HSK</shortName>
        <ecNumber evidence="1">2.7.1.39</ecNumber>
    </recommendedName>
</protein>
<feature type="chain" id="PRO_1000079016" description="Homoserine kinase">
    <location>
        <begin position="1"/>
        <end position="326"/>
    </location>
</feature>
<dbReference type="EC" id="2.7.1.39" evidence="1"/>
<dbReference type="EMBL" id="CP000872">
    <property type="protein sequence ID" value="ABX61563.1"/>
    <property type="molecule type" value="Genomic_DNA"/>
</dbReference>
<dbReference type="RefSeq" id="WP_004690619.1">
    <property type="nucleotide sequence ID" value="NC_010103.1"/>
</dbReference>
<dbReference type="SMR" id="A9M8Z9"/>
<dbReference type="KEGG" id="bcs:BCAN_A0483"/>
<dbReference type="HOGENOM" id="CLU_053300_1_0_5"/>
<dbReference type="PhylomeDB" id="A9M8Z9"/>
<dbReference type="UniPathway" id="UPA00050">
    <property type="reaction ID" value="UER00064"/>
</dbReference>
<dbReference type="Proteomes" id="UP000001385">
    <property type="component" value="Chromosome I"/>
</dbReference>
<dbReference type="GO" id="GO:0005524">
    <property type="term" value="F:ATP binding"/>
    <property type="evidence" value="ECO:0007669"/>
    <property type="project" value="UniProtKB-KW"/>
</dbReference>
<dbReference type="GO" id="GO:0004413">
    <property type="term" value="F:homoserine kinase activity"/>
    <property type="evidence" value="ECO:0007669"/>
    <property type="project" value="UniProtKB-UniRule"/>
</dbReference>
<dbReference type="GO" id="GO:0009088">
    <property type="term" value="P:threonine biosynthetic process"/>
    <property type="evidence" value="ECO:0007669"/>
    <property type="project" value="UniProtKB-UniRule"/>
</dbReference>
<dbReference type="CDD" id="cd05153">
    <property type="entry name" value="HomoserineK_II"/>
    <property type="match status" value="1"/>
</dbReference>
<dbReference type="Gene3D" id="3.90.1200.10">
    <property type="match status" value="1"/>
</dbReference>
<dbReference type="Gene3D" id="3.30.200.20">
    <property type="entry name" value="Phosphorylase Kinase, domain 1"/>
    <property type="match status" value="1"/>
</dbReference>
<dbReference type="HAMAP" id="MF_00301">
    <property type="entry name" value="Homoser_kinase_2"/>
    <property type="match status" value="1"/>
</dbReference>
<dbReference type="InterPro" id="IPR002575">
    <property type="entry name" value="Aminoglycoside_PTrfase"/>
</dbReference>
<dbReference type="InterPro" id="IPR005280">
    <property type="entry name" value="Homoserine_kinase_II"/>
</dbReference>
<dbReference type="InterPro" id="IPR011009">
    <property type="entry name" value="Kinase-like_dom_sf"/>
</dbReference>
<dbReference type="InterPro" id="IPR050249">
    <property type="entry name" value="Pseudomonas-type_ThrB"/>
</dbReference>
<dbReference type="NCBIfam" id="NF003558">
    <property type="entry name" value="PRK05231.1"/>
    <property type="match status" value="1"/>
</dbReference>
<dbReference type="NCBIfam" id="TIGR00938">
    <property type="entry name" value="thrB_alt"/>
    <property type="match status" value="1"/>
</dbReference>
<dbReference type="PANTHER" id="PTHR21064:SF6">
    <property type="entry name" value="AMINOGLYCOSIDE PHOSPHOTRANSFERASE DOMAIN-CONTAINING PROTEIN"/>
    <property type="match status" value="1"/>
</dbReference>
<dbReference type="PANTHER" id="PTHR21064">
    <property type="entry name" value="AMINOGLYCOSIDE PHOSPHOTRANSFERASE DOMAIN-CONTAINING PROTEIN-RELATED"/>
    <property type="match status" value="1"/>
</dbReference>
<dbReference type="Pfam" id="PF01636">
    <property type="entry name" value="APH"/>
    <property type="match status" value="1"/>
</dbReference>
<dbReference type="SUPFAM" id="SSF56112">
    <property type="entry name" value="Protein kinase-like (PK-like)"/>
    <property type="match status" value="1"/>
</dbReference>
<gene>
    <name evidence="1" type="primary">thrB</name>
    <name type="ordered locus">BCAN_A0483</name>
</gene>
<proteinExistence type="inferred from homology"/>